<name>Y6489_DICDI</name>
<reference key="1">
    <citation type="journal article" date="2005" name="Nature">
        <title>The genome of the social amoeba Dictyostelium discoideum.</title>
        <authorList>
            <person name="Eichinger L."/>
            <person name="Pachebat J.A."/>
            <person name="Gloeckner G."/>
            <person name="Rajandream M.A."/>
            <person name="Sucgang R."/>
            <person name="Berriman M."/>
            <person name="Song J."/>
            <person name="Olsen R."/>
            <person name="Szafranski K."/>
            <person name="Xu Q."/>
            <person name="Tunggal B."/>
            <person name="Kummerfeld S."/>
            <person name="Madera M."/>
            <person name="Konfortov B.A."/>
            <person name="Rivero F."/>
            <person name="Bankier A.T."/>
            <person name="Lehmann R."/>
            <person name="Hamlin N."/>
            <person name="Davies R."/>
            <person name="Gaudet P."/>
            <person name="Fey P."/>
            <person name="Pilcher K."/>
            <person name="Chen G."/>
            <person name="Saunders D."/>
            <person name="Sodergren E.J."/>
            <person name="Davis P."/>
            <person name="Kerhornou A."/>
            <person name="Nie X."/>
            <person name="Hall N."/>
            <person name="Anjard C."/>
            <person name="Hemphill L."/>
            <person name="Bason N."/>
            <person name="Farbrother P."/>
            <person name="Desany B."/>
            <person name="Just E."/>
            <person name="Morio T."/>
            <person name="Rost R."/>
            <person name="Churcher C.M."/>
            <person name="Cooper J."/>
            <person name="Haydock S."/>
            <person name="van Driessche N."/>
            <person name="Cronin A."/>
            <person name="Goodhead I."/>
            <person name="Muzny D.M."/>
            <person name="Mourier T."/>
            <person name="Pain A."/>
            <person name="Lu M."/>
            <person name="Harper D."/>
            <person name="Lindsay R."/>
            <person name="Hauser H."/>
            <person name="James K.D."/>
            <person name="Quiles M."/>
            <person name="Madan Babu M."/>
            <person name="Saito T."/>
            <person name="Buchrieser C."/>
            <person name="Wardroper A."/>
            <person name="Felder M."/>
            <person name="Thangavelu M."/>
            <person name="Johnson D."/>
            <person name="Knights A."/>
            <person name="Loulseged H."/>
            <person name="Mungall K.L."/>
            <person name="Oliver K."/>
            <person name="Price C."/>
            <person name="Quail M.A."/>
            <person name="Urushihara H."/>
            <person name="Hernandez J."/>
            <person name="Rabbinowitsch E."/>
            <person name="Steffen D."/>
            <person name="Sanders M."/>
            <person name="Ma J."/>
            <person name="Kohara Y."/>
            <person name="Sharp S."/>
            <person name="Simmonds M.N."/>
            <person name="Spiegler S."/>
            <person name="Tivey A."/>
            <person name="Sugano S."/>
            <person name="White B."/>
            <person name="Walker D."/>
            <person name="Woodward J.R."/>
            <person name="Winckler T."/>
            <person name="Tanaka Y."/>
            <person name="Shaulsky G."/>
            <person name="Schleicher M."/>
            <person name="Weinstock G.M."/>
            <person name="Rosenthal A."/>
            <person name="Cox E.C."/>
            <person name="Chisholm R.L."/>
            <person name="Gibbs R.A."/>
            <person name="Loomis W.F."/>
            <person name="Platzer M."/>
            <person name="Kay R.R."/>
            <person name="Williams J.G."/>
            <person name="Dear P.H."/>
            <person name="Noegel A.A."/>
            <person name="Barrell B.G."/>
            <person name="Kuspa A."/>
        </authorList>
    </citation>
    <scope>NUCLEOTIDE SEQUENCE [LARGE SCALE GENOMIC DNA]</scope>
    <source>
        <strain>AX4</strain>
    </source>
</reference>
<organism>
    <name type="scientific">Dictyostelium discoideum</name>
    <name type="common">Social amoeba</name>
    <dbReference type="NCBI Taxonomy" id="44689"/>
    <lineage>
        <taxon>Eukaryota</taxon>
        <taxon>Amoebozoa</taxon>
        <taxon>Evosea</taxon>
        <taxon>Eumycetozoa</taxon>
        <taxon>Dictyostelia</taxon>
        <taxon>Dictyosteliales</taxon>
        <taxon>Dictyosteliaceae</taxon>
        <taxon>Dictyostelium</taxon>
    </lineage>
</organism>
<proteinExistence type="predicted"/>
<sequence>MEFIINKINNIKNNNDNNNNINNNSNNNNNNNNNSNNNKFKFKYEFEFGYCYDVNLYEWRFIQDYETVPLKLNGILSNDEYNSILNIIGDVYDKTDKYPHVTYLLSIIMMVLLCMLPSVMAIHSNLNSYIQFVLFDDIFILITFILIPFLFFLKKKVIIENNYVIKGLKNRSIKLNIEYYKFKLLYFFFLLLWVPQGFLQSLIYKKRVLNEDFFNLKISLFILLGIDLIFILFAIWNFLLFTKLNRFLIKDRRDENILITLNSNIKKFLSPMEFYLTCNNTLNFFLNNNDNHFFPIDLDDPNV</sequence>
<accession>Q54N94</accession>
<protein>
    <recommendedName>
        <fullName>Putative uncharacterized transmembrane protein DDB_G0285385</fullName>
    </recommendedName>
</protein>
<keyword id="KW-0472">Membrane</keyword>
<keyword id="KW-1185">Reference proteome</keyword>
<keyword id="KW-0812">Transmembrane</keyword>
<keyword id="KW-1133">Transmembrane helix</keyword>
<gene>
    <name type="ORF">DDB_G0285385</name>
</gene>
<comment type="subcellular location">
    <subcellularLocation>
        <location evidence="2">Membrane</location>
        <topology evidence="2">Multi-pass membrane protein</topology>
    </subcellularLocation>
</comment>
<dbReference type="EMBL" id="AAFI02000079">
    <property type="protein sequence ID" value="EAL64767.1"/>
    <property type="molecule type" value="Genomic_DNA"/>
</dbReference>
<dbReference type="RefSeq" id="XP_638286.1">
    <property type="nucleotide sequence ID" value="XM_633194.1"/>
</dbReference>
<dbReference type="FunCoup" id="Q54N94">
    <property type="interactions" value="3"/>
</dbReference>
<dbReference type="PaxDb" id="44689-DDB0186489"/>
<dbReference type="EnsemblProtists" id="EAL64767">
    <property type="protein sequence ID" value="EAL64767"/>
    <property type="gene ID" value="DDB_G0285385"/>
</dbReference>
<dbReference type="GeneID" id="8625094"/>
<dbReference type="KEGG" id="ddi:DDB_G0285385"/>
<dbReference type="dictyBase" id="DDB_G0285385"/>
<dbReference type="VEuPathDB" id="AmoebaDB:DDB_G0285385"/>
<dbReference type="eggNOG" id="ENOG502RIPZ">
    <property type="taxonomic scope" value="Eukaryota"/>
</dbReference>
<dbReference type="HOGENOM" id="CLU_919597_0_0_1"/>
<dbReference type="InParanoid" id="Q54N94"/>
<dbReference type="OMA" id="NIEYYKF"/>
<dbReference type="PRO" id="PR:Q54N94"/>
<dbReference type="Proteomes" id="UP000002195">
    <property type="component" value="Chromosome 4"/>
</dbReference>
<dbReference type="GO" id="GO:0016020">
    <property type="term" value="C:membrane"/>
    <property type="evidence" value="ECO:0007669"/>
    <property type="project" value="UniProtKB-SubCell"/>
</dbReference>
<dbReference type="PANTHER" id="PTHR36911:SF3">
    <property type="entry name" value="GATA ZINC FINGER DOMAIN-CONTAINING PROTEIN 4-RELATED"/>
    <property type="match status" value="1"/>
</dbReference>
<dbReference type="PANTHER" id="PTHR36911">
    <property type="entry name" value="LIM ZINC-BINDING DOMAIN-CONTAINING PROTEIN-RELATED"/>
    <property type="match status" value="1"/>
</dbReference>
<feature type="chain" id="PRO_0000350804" description="Putative uncharacterized transmembrane protein DDB_G0285385">
    <location>
        <begin position="1"/>
        <end position="303"/>
    </location>
</feature>
<feature type="transmembrane region" description="Helical" evidence="1">
    <location>
        <begin position="102"/>
        <end position="122"/>
    </location>
</feature>
<feature type="transmembrane region" description="Helical" evidence="1">
    <location>
        <begin position="132"/>
        <end position="152"/>
    </location>
</feature>
<feature type="transmembrane region" description="Helical" evidence="1">
    <location>
        <begin position="184"/>
        <end position="204"/>
    </location>
</feature>
<feature type="transmembrane region" description="Helical" evidence="1">
    <location>
        <begin position="221"/>
        <end position="241"/>
    </location>
</feature>
<evidence type="ECO:0000255" key="1"/>
<evidence type="ECO:0000305" key="2"/>